<organism>
    <name type="scientific">Bovine coronavirus (strain Ontario)</name>
    <name type="common">BCoV</name>
    <name type="synonym">BCV</name>
    <dbReference type="NCBI Taxonomy" id="231422"/>
    <lineage>
        <taxon>Viruses</taxon>
        <taxon>Riboviria</taxon>
        <taxon>Orthornavirae</taxon>
        <taxon>Pisuviricota</taxon>
        <taxon>Pisoniviricetes</taxon>
        <taxon>Nidovirales</taxon>
        <taxon>Cornidovirineae</taxon>
        <taxon>Coronaviridae</taxon>
        <taxon>Orthocoronavirinae</taxon>
        <taxon>Betacoronavirus</taxon>
        <taxon>Embecovirus</taxon>
        <taxon>Betacoronavirus 1</taxon>
    </lineage>
</organism>
<proteinExistence type="inferred from homology"/>
<name>NS48_CVBON</name>
<organismHost>
    <name type="scientific">Bos taurus</name>
    <name type="common">Bovine</name>
    <dbReference type="NCBI Taxonomy" id="9913"/>
</organismHost>
<dbReference type="EMBL" id="AH010241">
    <property type="protein sequence ID" value="AAG60546.1"/>
    <property type="molecule type" value="Genomic_RNA"/>
</dbReference>
<dbReference type="EMBL" id="AH010063">
    <property type="protein sequence ID" value="AAG40625.1"/>
    <property type="molecule type" value="Genomic_DNA"/>
</dbReference>
<dbReference type="InterPro" id="IPR005603">
    <property type="entry name" value="Corona_NS4"/>
</dbReference>
<dbReference type="Pfam" id="PF03905">
    <property type="entry name" value="Corona_NS4"/>
    <property type="match status" value="1"/>
</dbReference>
<accession>P0C2R9</accession>
<accession>Q99H67</accession>
<accession>Q9DGZ6</accession>
<reference key="1">
    <citation type="journal article" date="2001" name="Virus Res.">
        <title>Bovine coronaviruses associated with enteric and respiratory diseases in Canadian dairy cattle display different reactivities to anti-HE monoclonal antibodies and distinct amino acid changes in their HE, S and ns4.9 protein.</title>
        <authorList>
            <person name="Gelinas A.-M."/>
            <person name="Boutin M."/>
            <person name="Sasseville A.M.-J."/>
            <person name="Dea S."/>
        </authorList>
    </citation>
    <scope>NUCLEOTIDE SEQUENCE [GENOMIC RNA]</scope>
    <source>
        <strain>Isolate BCO.43277</strain>
        <strain>Isolate BCO.44175</strain>
    </source>
</reference>
<comment type="similarity">
    <text evidence="1">Belongs to the coronaviruses ns4/ns4.8 protein family.</text>
</comment>
<sequence length="45" mass="4883">MPMATTIEVADYTNIMPITVSITVYLGVSIGIDTSTTGFTCFSRY</sequence>
<protein>
    <recommendedName>
        <fullName>Non-structural protein of 4.8 kDa</fullName>
        <shortName>ns4.8</shortName>
    </recommendedName>
    <alternativeName>
        <fullName>4.8 kDa accessory protein</fullName>
    </alternativeName>
</protein>
<gene>
    <name type="ORF">4b</name>
</gene>
<feature type="chain" id="PRO_0000283963" description="Non-structural protein of 4.8 kDa">
    <location>
        <begin position="1"/>
        <end position="45"/>
    </location>
</feature>
<feature type="sequence variant" description="In strain: Isolate BCO.43277.">
    <original>V</original>
    <variation>G</variation>
    <location>
        <position position="9"/>
    </location>
</feature>
<feature type="sequence variant" description="In strain: Isolate BCO.43277.">
    <original>SI</original>
    <variation>FT</variation>
    <location>
        <begin position="21"/>
        <end position="22"/>
    </location>
</feature>
<evidence type="ECO:0000305" key="1"/>